<protein>
    <recommendedName>
        <fullName>Secretion monitor</fullName>
    </recommendedName>
</protein>
<sequence>MGILNRWRQIGRRYFWPHLLLGIVAAGFGVPLLPGGGQEMLYQADNCPSLSRQSAFQAGFSQLARLKDVPCRTTYAVDYWHQHAIRTVIRHLSIAWAPAPLPEAVAPLRVQHQVLLTTLGLLLNREARPPVLVRRLRSTGHVAFIDNRSGIRLTQQQGIRAGPHAAV</sequence>
<evidence type="ECO:0000250" key="1"/>
<evidence type="ECO:0000255" key="2"/>
<evidence type="ECO:0000305" key="3"/>
<keyword id="KW-0963">Cytoplasm</keyword>
<keyword id="KW-0574">Periplasm</keyword>
<keyword id="KW-0732">Signal</keyword>
<feature type="signal peptide" evidence="2">
    <location>
        <begin position="1"/>
        <end position="29"/>
    </location>
</feature>
<feature type="chain" id="PRO_0000314452" description="Secretion monitor">
    <location>
        <begin position="30"/>
        <end position="167"/>
    </location>
</feature>
<proteinExistence type="inferred from homology"/>
<accession>Q2NVU4</accession>
<dbReference type="EMBL" id="AP008232">
    <property type="protein sequence ID" value="BAE73731.1"/>
    <property type="molecule type" value="Genomic_DNA"/>
</dbReference>
<dbReference type="RefSeq" id="WP_011410429.1">
    <property type="nucleotide sequence ID" value="NC_007712.1"/>
</dbReference>
<dbReference type="STRING" id="343509.SG0456"/>
<dbReference type="KEGG" id="sgl:SG0456"/>
<dbReference type="eggNOG" id="ENOG5031JGK">
    <property type="taxonomic scope" value="Bacteria"/>
</dbReference>
<dbReference type="HOGENOM" id="CLU_108853_0_0_6"/>
<dbReference type="OrthoDB" id="6495450at2"/>
<dbReference type="BioCyc" id="SGLO343509:SGP1_RS04050-MONOMER"/>
<dbReference type="Proteomes" id="UP000001932">
    <property type="component" value="Chromosome"/>
</dbReference>
<dbReference type="GO" id="GO:0005829">
    <property type="term" value="C:cytosol"/>
    <property type="evidence" value="ECO:0007669"/>
    <property type="project" value="UniProtKB-SubCell"/>
</dbReference>
<dbReference type="GO" id="GO:0042597">
    <property type="term" value="C:periplasmic space"/>
    <property type="evidence" value="ECO:0007669"/>
    <property type="project" value="UniProtKB-SubCell"/>
</dbReference>
<dbReference type="GO" id="GO:0045182">
    <property type="term" value="F:translation regulator activity"/>
    <property type="evidence" value="ECO:0007669"/>
    <property type="project" value="InterPro"/>
</dbReference>
<dbReference type="HAMAP" id="MF_01332">
    <property type="entry name" value="SecM"/>
    <property type="match status" value="1"/>
</dbReference>
<dbReference type="InterPro" id="IPR009502">
    <property type="entry name" value="SecM"/>
</dbReference>
<dbReference type="NCBIfam" id="NF002799">
    <property type="entry name" value="PRK02943.1-1"/>
    <property type="match status" value="1"/>
</dbReference>
<dbReference type="Pfam" id="PF06558">
    <property type="entry name" value="SecM"/>
    <property type="match status" value="1"/>
</dbReference>
<dbReference type="PIRSF" id="PIRSF004572">
    <property type="entry name" value="SecM"/>
    <property type="match status" value="1"/>
</dbReference>
<comment type="function">
    <text evidence="1">Regulates secA expression by translational coupling of the secM secA operon. Translational pausing at a specific Pro residue 5 residues before the end of the protein may allow disruption of a mRNA repressor helix that normally suppresses secA translation initiation (By similarity).</text>
</comment>
<comment type="subcellular location">
    <subcellularLocation>
        <location evidence="1">Cytoplasm</location>
        <location evidence="1">Cytosol</location>
    </subcellularLocation>
    <subcellularLocation>
        <location evidence="1">Periplasm</location>
    </subcellularLocation>
    <text evidence="1">The active form is cytosolic, while the periplasmic form is rapidly degraded, mainly by the tail-specific protease.</text>
</comment>
<comment type="similarity">
    <text evidence="3">Belongs to the SecM family.</text>
</comment>
<comment type="caution">
    <text evidence="3">This is very poor signal peptide prediction.</text>
</comment>
<name>SECM_SODGM</name>
<gene>
    <name type="primary">secM</name>
    <name type="ordered locus">SG0456</name>
</gene>
<organism>
    <name type="scientific">Sodalis glossinidius (strain morsitans)</name>
    <dbReference type="NCBI Taxonomy" id="343509"/>
    <lineage>
        <taxon>Bacteria</taxon>
        <taxon>Pseudomonadati</taxon>
        <taxon>Pseudomonadota</taxon>
        <taxon>Gammaproteobacteria</taxon>
        <taxon>Enterobacterales</taxon>
        <taxon>Bruguierivoracaceae</taxon>
        <taxon>Sodalis</taxon>
    </lineage>
</organism>
<reference key="1">
    <citation type="journal article" date="2006" name="Genome Res.">
        <title>Massive genome erosion and functional adaptations provide insights into the symbiotic lifestyle of Sodalis glossinidius in the tsetse host.</title>
        <authorList>
            <person name="Toh H."/>
            <person name="Weiss B.L."/>
            <person name="Perkin S.A.H."/>
            <person name="Yamashita A."/>
            <person name="Oshima K."/>
            <person name="Hattori M."/>
            <person name="Aksoy S."/>
        </authorList>
    </citation>
    <scope>NUCLEOTIDE SEQUENCE [LARGE SCALE GENOMIC DNA]</scope>
    <source>
        <strain>morsitans</strain>
    </source>
</reference>